<proteinExistence type="inferred from homology"/>
<gene>
    <name evidence="1" type="primary">argG</name>
    <name type="ordered locus">P9301_18981</name>
</gene>
<feature type="chain" id="PRO_1000000417" description="Argininosuccinate synthase">
    <location>
        <begin position="1"/>
        <end position="404"/>
    </location>
</feature>
<feature type="binding site" evidence="1">
    <location>
        <begin position="10"/>
        <end position="18"/>
    </location>
    <ligand>
        <name>ATP</name>
        <dbReference type="ChEBI" id="CHEBI:30616"/>
    </ligand>
</feature>
<feature type="binding site" evidence="1">
    <location>
        <position position="38"/>
    </location>
    <ligand>
        <name>ATP</name>
        <dbReference type="ChEBI" id="CHEBI:30616"/>
    </ligand>
</feature>
<feature type="binding site" evidence="1">
    <location>
        <position position="89"/>
    </location>
    <ligand>
        <name>L-citrulline</name>
        <dbReference type="ChEBI" id="CHEBI:57743"/>
    </ligand>
</feature>
<feature type="binding site" evidence="1">
    <location>
        <position position="119"/>
    </location>
    <ligand>
        <name>ATP</name>
        <dbReference type="ChEBI" id="CHEBI:30616"/>
    </ligand>
</feature>
<feature type="binding site" evidence="1">
    <location>
        <position position="121"/>
    </location>
    <ligand>
        <name>L-aspartate</name>
        <dbReference type="ChEBI" id="CHEBI:29991"/>
    </ligand>
</feature>
<feature type="binding site" evidence="1">
    <location>
        <position position="125"/>
    </location>
    <ligand>
        <name>L-aspartate</name>
        <dbReference type="ChEBI" id="CHEBI:29991"/>
    </ligand>
</feature>
<feature type="binding site" evidence="1">
    <location>
        <position position="125"/>
    </location>
    <ligand>
        <name>L-citrulline</name>
        <dbReference type="ChEBI" id="CHEBI:57743"/>
    </ligand>
</feature>
<feature type="binding site" evidence="1">
    <location>
        <position position="126"/>
    </location>
    <ligand>
        <name>L-aspartate</name>
        <dbReference type="ChEBI" id="CHEBI:29991"/>
    </ligand>
</feature>
<feature type="binding site" evidence="1">
    <location>
        <position position="129"/>
    </location>
    <ligand>
        <name>L-citrulline</name>
        <dbReference type="ChEBI" id="CHEBI:57743"/>
    </ligand>
</feature>
<feature type="binding site" evidence="1">
    <location>
        <position position="177"/>
    </location>
    <ligand>
        <name>L-citrulline</name>
        <dbReference type="ChEBI" id="CHEBI:57743"/>
    </ligand>
</feature>
<feature type="binding site" evidence="1">
    <location>
        <position position="186"/>
    </location>
    <ligand>
        <name>L-citrulline</name>
        <dbReference type="ChEBI" id="CHEBI:57743"/>
    </ligand>
</feature>
<feature type="binding site" evidence="1">
    <location>
        <position position="262"/>
    </location>
    <ligand>
        <name>L-citrulline</name>
        <dbReference type="ChEBI" id="CHEBI:57743"/>
    </ligand>
</feature>
<feature type="binding site" evidence="1">
    <location>
        <position position="274"/>
    </location>
    <ligand>
        <name>L-citrulline</name>
        <dbReference type="ChEBI" id="CHEBI:57743"/>
    </ligand>
</feature>
<comment type="catalytic activity">
    <reaction evidence="1">
        <text>L-citrulline + L-aspartate + ATP = 2-(N(omega)-L-arginino)succinate + AMP + diphosphate + H(+)</text>
        <dbReference type="Rhea" id="RHEA:10932"/>
        <dbReference type="ChEBI" id="CHEBI:15378"/>
        <dbReference type="ChEBI" id="CHEBI:29991"/>
        <dbReference type="ChEBI" id="CHEBI:30616"/>
        <dbReference type="ChEBI" id="CHEBI:33019"/>
        <dbReference type="ChEBI" id="CHEBI:57472"/>
        <dbReference type="ChEBI" id="CHEBI:57743"/>
        <dbReference type="ChEBI" id="CHEBI:456215"/>
        <dbReference type="EC" id="6.3.4.5"/>
    </reaction>
</comment>
<comment type="pathway">
    <text evidence="1">Amino-acid biosynthesis; L-arginine biosynthesis; L-arginine from L-ornithine and carbamoyl phosphate: step 2/3.</text>
</comment>
<comment type="subunit">
    <text evidence="1">Homotetramer.</text>
</comment>
<comment type="subcellular location">
    <subcellularLocation>
        <location evidence="1">Cytoplasm</location>
    </subcellularLocation>
</comment>
<comment type="similarity">
    <text evidence="1">Belongs to the argininosuccinate synthase family. Type 1 subfamily.</text>
</comment>
<reference key="1">
    <citation type="journal article" date="2007" name="PLoS Genet.">
        <title>Patterns and implications of gene gain and loss in the evolution of Prochlorococcus.</title>
        <authorList>
            <person name="Kettler G.C."/>
            <person name="Martiny A.C."/>
            <person name="Huang K."/>
            <person name="Zucker J."/>
            <person name="Coleman M.L."/>
            <person name="Rodrigue S."/>
            <person name="Chen F."/>
            <person name="Lapidus A."/>
            <person name="Ferriera S."/>
            <person name="Johnson J."/>
            <person name="Steglich C."/>
            <person name="Church G.M."/>
            <person name="Richardson P."/>
            <person name="Chisholm S.W."/>
        </authorList>
    </citation>
    <scope>NUCLEOTIDE SEQUENCE [LARGE SCALE GENOMIC DNA]</scope>
    <source>
        <strain>MIT 9301</strain>
    </source>
</reference>
<accession>A3PFJ6</accession>
<sequence length="404" mass="44621">MQQVKKVVLAYSGGVDTSVCIPYLKKEYGVSEVVTFVADLGQGEDLELIRQKALNSGASQSIVGNLVNSFVERYAFPAIRANALYLDKYPLSTALARPLIAENLVNIAREISADAVAHGCTGKGNDQVRFDLAINALGPDLKIITPAREWNMSREEAIEYGEKFGIPAPVSKKSPYSIDVNLLGRSIEAGILEDPMKEAPEDIFAMTSSIENSPDSPQEVEIIFKNGFPVGINDESLTPVEIIKKANVLAGEHGFGRIDMIEDRVVGIKSREIYETPGLLLLIKAHKELESITLNPDVVDFKGIVEKKWGQLVYQGFWFGPLKDSLDSFISSTQTAVNGRVKIRLHKGNAIVIGRMSENNSLYREDLATYSEEDVFNHSLAEGFIYMWGMSNKIWAELNSKTKD</sequence>
<organism>
    <name type="scientific">Prochlorococcus marinus (strain MIT 9301)</name>
    <dbReference type="NCBI Taxonomy" id="167546"/>
    <lineage>
        <taxon>Bacteria</taxon>
        <taxon>Bacillati</taxon>
        <taxon>Cyanobacteriota</taxon>
        <taxon>Cyanophyceae</taxon>
        <taxon>Synechococcales</taxon>
        <taxon>Prochlorococcaceae</taxon>
        <taxon>Prochlorococcus</taxon>
    </lineage>
</organism>
<name>ASSY_PROM0</name>
<dbReference type="EC" id="6.3.4.5" evidence="1"/>
<dbReference type="EMBL" id="CP000576">
    <property type="protein sequence ID" value="ABO18521.1"/>
    <property type="molecule type" value="Genomic_DNA"/>
</dbReference>
<dbReference type="RefSeq" id="WP_011863802.1">
    <property type="nucleotide sequence ID" value="NC_009091.1"/>
</dbReference>
<dbReference type="SMR" id="A3PFJ6"/>
<dbReference type="STRING" id="167546.P9301_18981"/>
<dbReference type="KEGG" id="pmg:P9301_18981"/>
<dbReference type="eggNOG" id="COG0137">
    <property type="taxonomic scope" value="Bacteria"/>
</dbReference>
<dbReference type="HOGENOM" id="CLU_032784_4_2_3"/>
<dbReference type="OrthoDB" id="9801641at2"/>
<dbReference type="UniPathway" id="UPA00068">
    <property type="reaction ID" value="UER00113"/>
</dbReference>
<dbReference type="Proteomes" id="UP000001430">
    <property type="component" value="Chromosome"/>
</dbReference>
<dbReference type="GO" id="GO:0005737">
    <property type="term" value="C:cytoplasm"/>
    <property type="evidence" value="ECO:0007669"/>
    <property type="project" value="UniProtKB-SubCell"/>
</dbReference>
<dbReference type="GO" id="GO:0004055">
    <property type="term" value="F:argininosuccinate synthase activity"/>
    <property type="evidence" value="ECO:0007669"/>
    <property type="project" value="UniProtKB-UniRule"/>
</dbReference>
<dbReference type="GO" id="GO:0005524">
    <property type="term" value="F:ATP binding"/>
    <property type="evidence" value="ECO:0007669"/>
    <property type="project" value="UniProtKB-UniRule"/>
</dbReference>
<dbReference type="GO" id="GO:0000053">
    <property type="term" value="P:argininosuccinate metabolic process"/>
    <property type="evidence" value="ECO:0007669"/>
    <property type="project" value="TreeGrafter"/>
</dbReference>
<dbReference type="GO" id="GO:0006526">
    <property type="term" value="P:L-arginine biosynthetic process"/>
    <property type="evidence" value="ECO:0007669"/>
    <property type="project" value="UniProtKB-UniRule"/>
</dbReference>
<dbReference type="GO" id="GO:0000050">
    <property type="term" value="P:urea cycle"/>
    <property type="evidence" value="ECO:0007669"/>
    <property type="project" value="TreeGrafter"/>
</dbReference>
<dbReference type="CDD" id="cd01999">
    <property type="entry name" value="ASS"/>
    <property type="match status" value="1"/>
</dbReference>
<dbReference type="FunFam" id="3.40.50.620:FF:000019">
    <property type="entry name" value="Argininosuccinate synthase"/>
    <property type="match status" value="1"/>
</dbReference>
<dbReference type="FunFam" id="3.90.1260.10:FF:000007">
    <property type="entry name" value="Argininosuccinate synthase"/>
    <property type="match status" value="1"/>
</dbReference>
<dbReference type="Gene3D" id="3.90.1260.10">
    <property type="entry name" value="Argininosuccinate synthetase, chain A, domain 2"/>
    <property type="match status" value="1"/>
</dbReference>
<dbReference type="Gene3D" id="3.40.50.620">
    <property type="entry name" value="HUPs"/>
    <property type="match status" value="1"/>
</dbReference>
<dbReference type="Gene3D" id="1.20.5.470">
    <property type="entry name" value="Single helix bin"/>
    <property type="match status" value="1"/>
</dbReference>
<dbReference type="HAMAP" id="MF_00005">
    <property type="entry name" value="Arg_succ_synth_type1"/>
    <property type="match status" value="1"/>
</dbReference>
<dbReference type="InterPro" id="IPR048268">
    <property type="entry name" value="Arginosuc_syn_C"/>
</dbReference>
<dbReference type="InterPro" id="IPR048267">
    <property type="entry name" value="Arginosuc_syn_N"/>
</dbReference>
<dbReference type="InterPro" id="IPR001518">
    <property type="entry name" value="Arginosuc_synth"/>
</dbReference>
<dbReference type="InterPro" id="IPR018223">
    <property type="entry name" value="Arginosuc_synth_CS"/>
</dbReference>
<dbReference type="InterPro" id="IPR023434">
    <property type="entry name" value="Arginosuc_synth_type_1_subfam"/>
</dbReference>
<dbReference type="InterPro" id="IPR024074">
    <property type="entry name" value="AS_cat/multimer_dom_body"/>
</dbReference>
<dbReference type="InterPro" id="IPR014729">
    <property type="entry name" value="Rossmann-like_a/b/a_fold"/>
</dbReference>
<dbReference type="NCBIfam" id="TIGR00032">
    <property type="entry name" value="argG"/>
    <property type="match status" value="1"/>
</dbReference>
<dbReference type="NCBIfam" id="NF001770">
    <property type="entry name" value="PRK00509.1"/>
    <property type="match status" value="1"/>
</dbReference>
<dbReference type="PANTHER" id="PTHR11587">
    <property type="entry name" value="ARGININOSUCCINATE SYNTHASE"/>
    <property type="match status" value="1"/>
</dbReference>
<dbReference type="PANTHER" id="PTHR11587:SF2">
    <property type="entry name" value="ARGININOSUCCINATE SYNTHASE"/>
    <property type="match status" value="1"/>
</dbReference>
<dbReference type="Pfam" id="PF20979">
    <property type="entry name" value="Arginosuc_syn_C"/>
    <property type="match status" value="1"/>
</dbReference>
<dbReference type="Pfam" id="PF00764">
    <property type="entry name" value="Arginosuc_synth"/>
    <property type="match status" value="1"/>
</dbReference>
<dbReference type="SUPFAM" id="SSF52402">
    <property type="entry name" value="Adenine nucleotide alpha hydrolases-like"/>
    <property type="match status" value="1"/>
</dbReference>
<dbReference type="SUPFAM" id="SSF69864">
    <property type="entry name" value="Argininosuccinate synthetase, C-terminal domain"/>
    <property type="match status" value="1"/>
</dbReference>
<dbReference type="PROSITE" id="PS00564">
    <property type="entry name" value="ARGININOSUCCIN_SYN_1"/>
    <property type="match status" value="1"/>
</dbReference>
<dbReference type="PROSITE" id="PS00565">
    <property type="entry name" value="ARGININOSUCCIN_SYN_2"/>
    <property type="match status" value="1"/>
</dbReference>
<protein>
    <recommendedName>
        <fullName evidence="1">Argininosuccinate synthase</fullName>
        <ecNumber evidence="1">6.3.4.5</ecNumber>
    </recommendedName>
    <alternativeName>
        <fullName evidence="1">Citrulline--aspartate ligase</fullName>
    </alternativeName>
</protein>
<keyword id="KW-0028">Amino-acid biosynthesis</keyword>
<keyword id="KW-0055">Arginine biosynthesis</keyword>
<keyword id="KW-0067">ATP-binding</keyword>
<keyword id="KW-0963">Cytoplasm</keyword>
<keyword id="KW-0436">Ligase</keyword>
<keyword id="KW-0547">Nucleotide-binding</keyword>
<keyword id="KW-1185">Reference proteome</keyword>
<evidence type="ECO:0000255" key="1">
    <source>
        <dbReference type="HAMAP-Rule" id="MF_00005"/>
    </source>
</evidence>